<reference key="1">
    <citation type="journal article" date="2006" name="Proc. Natl. Acad. Sci. U.S.A.">
        <title>Comparative genomics of the lactic acid bacteria.</title>
        <authorList>
            <person name="Makarova K.S."/>
            <person name="Slesarev A."/>
            <person name="Wolf Y.I."/>
            <person name="Sorokin A."/>
            <person name="Mirkin B."/>
            <person name="Koonin E.V."/>
            <person name="Pavlov A."/>
            <person name="Pavlova N."/>
            <person name="Karamychev V."/>
            <person name="Polouchine N."/>
            <person name="Shakhova V."/>
            <person name="Grigoriev I."/>
            <person name="Lou Y."/>
            <person name="Rohksar D."/>
            <person name="Lucas S."/>
            <person name="Huang K."/>
            <person name="Goodstein D.M."/>
            <person name="Hawkins T."/>
            <person name="Plengvidhya V."/>
            <person name="Welker D."/>
            <person name="Hughes J."/>
            <person name="Goh Y."/>
            <person name="Benson A."/>
            <person name="Baldwin K."/>
            <person name="Lee J.-H."/>
            <person name="Diaz-Muniz I."/>
            <person name="Dosti B."/>
            <person name="Smeianov V."/>
            <person name="Wechter W."/>
            <person name="Barabote R."/>
            <person name="Lorca G."/>
            <person name="Altermann E."/>
            <person name="Barrangou R."/>
            <person name="Ganesan B."/>
            <person name="Xie Y."/>
            <person name="Rawsthorne H."/>
            <person name="Tamir D."/>
            <person name="Parker C."/>
            <person name="Breidt F."/>
            <person name="Broadbent J.R."/>
            <person name="Hutkins R."/>
            <person name="O'Sullivan D."/>
            <person name="Steele J."/>
            <person name="Unlu G."/>
            <person name="Saier M.H. Jr."/>
            <person name="Klaenhammer T."/>
            <person name="Richardson P."/>
            <person name="Kozyavkin S."/>
            <person name="Weimer B.C."/>
            <person name="Mills D.A."/>
        </authorList>
    </citation>
    <scope>NUCLEOTIDE SEQUENCE [LARGE SCALE GENOMIC DNA]</scope>
    <source>
        <strain>ATCC BAA-365 / Lb-18</strain>
    </source>
</reference>
<feature type="chain" id="PRO_1000026102" description="ATP-dependent Clp protease proteolytic subunit">
    <location>
        <begin position="1"/>
        <end position="194"/>
    </location>
</feature>
<feature type="active site" description="Nucleophile" evidence="1">
    <location>
        <position position="97"/>
    </location>
</feature>
<feature type="active site" evidence="1">
    <location>
        <position position="122"/>
    </location>
</feature>
<name>CLPP_LACDB</name>
<proteinExistence type="inferred from homology"/>
<organism>
    <name type="scientific">Lactobacillus delbrueckii subsp. bulgaricus (strain ATCC BAA-365 / Lb-18)</name>
    <dbReference type="NCBI Taxonomy" id="321956"/>
    <lineage>
        <taxon>Bacteria</taxon>
        <taxon>Bacillati</taxon>
        <taxon>Bacillota</taxon>
        <taxon>Bacilli</taxon>
        <taxon>Lactobacillales</taxon>
        <taxon>Lactobacillaceae</taxon>
        <taxon>Lactobacillus</taxon>
    </lineage>
</organism>
<sequence>MLVPTVIEQTARGERAYDIYSRLLKDRIIMLSGDVNDQMANSIIAQLLFLDAQDNTKDIYMYINSPGGVITSGMAIVDTMNFIKSPVSTIATGMAASMASIILAEGEKGKRFALPHATVLIHQPLGGAQGQATEIQIAAEEILKTRKMINEILAKDSGQDIETIKRDTERDHYMTAQEAKDYGLIDDIMVNQNK</sequence>
<comment type="function">
    <text evidence="1">Cleaves peptides in various proteins in a process that requires ATP hydrolysis. Has a chymotrypsin-like activity. Plays a major role in the degradation of misfolded proteins.</text>
</comment>
<comment type="catalytic activity">
    <reaction evidence="1">
        <text>Hydrolysis of proteins to small peptides in the presence of ATP and magnesium. alpha-casein is the usual test substrate. In the absence of ATP, only oligopeptides shorter than five residues are hydrolyzed (such as succinyl-Leu-Tyr-|-NHMec, and Leu-Tyr-Leu-|-Tyr-Trp, in which cleavage of the -Tyr-|-Leu- and -Tyr-|-Trp bonds also occurs).</text>
        <dbReference type="EC" id="3.4.21.92"/>
    </reaction>
</comment>
<comment type="subunit">
    <text evidence="1">Fourteen ClpP subunits assemble into 2 heptameric rings which stack back to back to give a disk-like structure with a central cavity, resembling the structure of eukaryotic proteasomes.</text>
</comment>
<comment type="subcellular location">
    <subcellularLocation>
        <location evidence="1">Cytoplasm</location>
    </subcellularLocation>
</comment>
<comment type="similarity">
    <text evidence="1">Belongs to the peptidase S14 family.</text>
</comment>
<keyword id="KW-0963">Cytoplasm</keyword>
<keyword id="KW-0378">Hydrolase</keyword>
<keyword id="KW-0645">Protease</keyword>
<keyword id="KW-0720">Serine protease</keyword>
<accession>Q04BH7</accession>
<dbReference type="EC" id="3.4.21.92" evidence="1"/>
<dbReference type="EMBL" id="CP000412">
    <property type="protein sequence ID" value="ABJ58195.1"/>
    <property type="molecule type" value="Genomic_DNA"/>
</dbReference>
<dbReference type="RefSeq" id="WP_003618944.1">
    <property type="nucleotide sequence ID" value="NC_008529.1"/>
</dbReference>
<dbReference type="SMR" id="Q04BH7"/>
<dbReference type="MEROPS" id="S14.001"/>
<dbReference type="KEGG" id="lbu:LBUL_0559"/>
<dbReference type="HOGENOM" id="CLU_058707_3_2_9"/>
<dbReference type="BioCyc" id="LDEL321956:LBUL_RS02655-MONOMER"/>
<dbReference type="GO" id="GO:0005737">
    <property type="term" value="C:cytoplasm"/>
    <property type="evidence" value="ECO:0007669"/>
    <property type="project" value="UniProtKB-SubCell"/>
</dbReference>
<dbReference type="GO" id="GO:0009368">
    <property type="term" value="C:endopeptidase Clp complex"/>
    <property type="evidence" value="ECO:0007669"/>
    <property type="project" value="TreeGrafter"/>
</dbReference>
<dbReference type="GO" id="GO:0004176">
    <property type="term" value="F:ATP-dependent peptidase activity"/>
    <property type="evidence" value="ECO:0007669"/>
    <property type="project" value="InterPro"/>
</dbReference>
<dbReference type="GO" id="GO:0051117">
    <property type="term" value="F:ATPase binding"/>
    <property type="evidence" value="ECO:0007669"/>
    <property type="project" value="TreeGrafter"/>
</dbReference>
<dbReference type="GO" id="GO:0004252">
    <property type="term" value="F:serine-type endopeptidase activity"/>
    <property type="evidence" value="ECO:0007669"/>
    <property type="project" value="UniProtKB-UniRule"/>
</dbReference>
<dbReference type="GO" id="GO:0006515">
    <property type="term" value="P:protein quality control for misfolded or incompletely synthesized proteins"/>
    <property type="evidence" value="ECO:0007669"/>
    <property type="project" value="TreeGrafter"/>
</dbReference>
<dbReference type="CDD" id="cd07017">
    <property type="entry name" value="S14_ClpP_2"/>
    <property type="match status" value="1"/>
</dbReference>
<dbReference type="FunFam" id="3.90.226.10:FF:000001">
    <property type="entry name" value="ATP-dependent Clp protease proteolytic subunit"/>
    <property type="match status" value="1"/>
</dbReference>
<dbReference type="Gene3D" id="3.90.226.10">
    <property type="entry name" value="2-enoyl-CoA Hydratase, Chain A, domain 1"/>
    <property type="match status" value="1"/>
</dbReference>
<dbReference type="HAMAP" id="MF_00444">
    <property type="entry name" value="ClpP"/>
    <property type="match status" value="1"/>
</dbReference>
<dbReference type="InterPro" id="IPR001907">
    <property type="entry name" value="ClpP"/>
</dbReference>
<dbReference type="InterPro" id="IPR029045">
    <property type="entry name" value="ClpP/crotonase-like_dom_sf"/>
</dbReference>
<dbReference type="InterPro" id="IPR023562">
    <property type="entry name" value="ClpP/TepA"/>
</dbReference>
<dbReference type="InterPro" id="IPR033135">
    <property type="entry name" value="ClpP_His_AS"/>
</dbReference>
<dbReference type="NCBIfam" id="NF001368">
    <property type="entry name" value="PRK00277.1"/>
    <property type="match status" value="1"/>
</dbReference>
<dbReference type="NCBIfam" id="NF009205">
    <property type="entry name" value="PRK12553.1"/>
    <property type="match status" value="1"/>
</dbReference>
<dbReference type="PANTHER" id="PTHR10381">
    <property type="entry name" value="ATP-DEPENDENT CLP PROTEASE PROTEOLYTIC SUBUNIT"/>
    <property type="match status" value="1"/>
</dbReference>
<dbReference type="PANTHER" id="PTHR10381:SF70">
    <property type="entry name" value="ATP-DEPENDENT CLP PROTEASE PROTEOLYTIC SUBUNIT"/>
    <property type="match status" value="1"/>
</dbReference>
<dbReference type="Pfam" id="PF00574">
    <property type="entry name" value="CLP_protease"/>
    <property type="match status" value="1"/>
</dbReference>
<dbReference type="PRINTS" id="PR00127">
    <property type="entry name" value="CLPPROTEASEP"/>
</dbReference>
<dbReference type="SUPFAM" id="SSF52096">
    <property type="entry name" value="ClpP/crotonase"/>
    <property type="match status" value="1"/>
</dbReference>
<dbReference type="PROSITE" id="PS00382">
    <property type="entry name" value="CLP_PROTEASE_HIS"/>
    <property type="match status" value="1"/>
</dbReference>
<evidence type="ECO:0000255" key="1">
    <source>
        <dbReference type="HAMAP-Rule" id="MF_00444"/>
    </source>
</evidence>
<gene>
    <name evidence="1" type="primary">clpP</name>
    <name type="ordered locus">LBUL_0559</name>
</gene>
<protein>
    <recommendedName>
        <fullName evidence="1">ATP-dependent Clp protease proteolytic subunit</fullName>
        <ecNumber evidence="1">3.4.21.92</ecNumber>
    </recommendedName>
    <alternativeName>
        <fullName evidence="1">Endopeptidase Clp</fullName>
    </alternativeName>
</protein>